<gene>
    <name evidence="1" type="primary">dnaK</name>
    <name type="ordered locus">OB1968</name>
</gene>
<organism>
    <name type="scientific">Oceanobacillus iheyensis (strain DSM 14371 / CIP 107618 / JCM 11309 / KCTC 3954 / HTE831)</name>
    <dbReference type="NCBI Taxonomy" id="221109"/>
    <lineage>
        <taxon>Bacteria</taxon>
        <taxon>Bacillati</taxon>
        <taxon>Bacillota</taxon>
        <taxon>Bacilli</taxon>
        <taxon>Bacillales</taxon>
        <taxon>Bacillaceae</taxon>
        <taxon>Oceanobacillus</taxon>
    </lineage>
</organism>
<comment type="function">
    <text evidence="1">Acts as a chaperone.</text>
</comment>
<comment type="induction">
    <text evidence="1">By stress conditions e.g. heat shock.</text>
</comment>
<comment type="similarity">
    <text evidence="1">Belongs to the heat shock protein 70 family.</text>
</comment>
<dbReference type="EMBL" id="BA000028">
    <property type="protein sequence ID" value="BAC13924.1"/>
    <property type="molecule type" value="Genomic_DNA"/>
</dbReference>
<dbReference type="RefSeq" id="WP_011066365.1">
    <property type="nucleotide sequence ID" value="NC_004193.1"/>
</dbReference>
<dbReference type="SMR" id="Q8EPW4"/>
<dbReference type="STRING" id="221109.gene:10734214"/>
<dbReference type="KEGG" id="oih:OB1968"/>
<dbReference type="eggNOG" id="COG0443">
    <property type="taxonomic scope" value="Bacteria"/>
</dbReference>
<dbReference type="HOGENOM" id="CLU_005965_2_4_9"/>
<dbReference type="OrthoDB" id="9766019at2"/>
<dbReference type="PhylomeDB" id="Q8EPW4"/>
<dbReference type="Proteomes" id="UP000000822">
    <property type="component" value="Chromosome"/>
</dbReference>
<dbReference type="GO" id="GO:0005524">
    <property type="term" value="F:ATP binding"/>
    <property type="evidence" value="ECO:0007669"/>
    <property type="project" value="UniProtKB-UniRule"/>
</dbReference>
<dbReference type="GO" id="GO:0140662">
    <property type="term" value="F:ATP-dependent protein folding chaperone"/>
    <property type="evidence" value="ECO:0007669"/>
    <property type="project" value="InterPro"/>
</dbReference>
<dbReference type="GO" id="GO:0051082">
    <property type="term" value="F:unfolded protein binding"/>
    <property type="evidence" value="ECO:0007669"/>
    <property type="project" value="InterPro"/>
</dbReference>
<dbReference type="CDD" id="cd10234">
    <property type="entry name" value="ASKHA_NBD_HSP70_DnaK-like"/>
    <property type="match status" value="1"/>
</dbReference>
<dbReference type="FunFam" id="2.60.34.10:FF:000014">
    <property type="entry name" value="Chaperone protein DnaK HSP70"/>
    <property type="match status" value="1"/>
</dbReference>
<dbReference type="FunFam" id="1.20.1270.10:FF:000001">
    <property type="entry name" value="Molecular chaperone DnaK"/>
    <property type="match status" value="1"/>
</dbReference>
<dbReference type="FunFam" id="3.30.420.40:FF:000071">
    <property type="entry name" value="Molecular chaperone DnaK"/>
    <property type="match status" value="1"/>
</dbReference>
<dbReference type="FunFam" id="3.90.640.10:FF:000003">
    <property type="entry name" value="Molecular chaperone DnaK"/>
    <property type="match status" value="1"/>
</dbReference>
<dbReference type="Gene3D" id="1.20.1270.10">
    <property type="match status" value="1"/>
</dbReference>
<dbReference type="Gene3D" id="3.30.420.40">
    <property type="match status" value="2"/>
</dbReference>
<dbReference type="Gene3D" id="3.90.640.10">
    <property type="entry name" value="Actin, Chain A, domain 4"/>
    <property type="match status" value="1"/>
</dbReference>
<dbReference type="Gene3D" id="2.60.34.10">
    <property type="entry name" value="Substrate Binding Domain Of DNAk, Chain A, domain 1"/>
    <property type="match status" value="1"/>
</dbReference>
<dbReference type="HAMAP" id="MF_00332">
    <property type="entry name" value="DnaK"/>
    <property type="match status" value="1"/>
</dbReference>
<dbReference type="InterPro" id="IPR043129">
    <property type="entry name" value="ATPase_NBD"/>
</dbReference>
<dbReference type="InterPro" id="IPR012725">
    <property type="entry name" value="Chaperone_DnaK"/>
</dbReference>
<dbReference type="InterPro" id="IPR018181">
    <property type="entry name" value="Heat_shock_70_CS"/>
</dbReference>
<dbReference type="InterPro" id="IPR029048">
    <property type="entry name" value="HSP70_C_sf"/>
</dbReference>
<dbReference type="InterPro" id="IPR029047">
    <property type="entry name" value="HSP70_peptide-bd_sf"/>
</dbReference>
<dbReference type="InterPro" id="IPR013126">
    <property type="entry name" value="Hsp_70_fam"/>
</dbReference>
<dbReference type="NCBIfam" id="NF001413">
    <property type="entry name" value="PRK00290.1"/>
    <property type="match status" value="1"/>
</dbReference>
<dbReference type="NCBIfam" id="TIGR02350">
    <property type="entry name" value="prok_dnaK"/>
    <property type="match status" value="1"/>
</dbReference>
<dbReference type="PANTHER" id="PTHR19375">
    <property type="entry name" value="HEAT SHOCK PROTEIN 70KDA"/>
    <property type="match status" value="1"/>
</dbReference>
<dbReference type="Pfam" id="PF00012">
    <property type="entry name" value="HSP70"/>
    <property type="match status" value="1"/>
</dbReference>
<dbReference type="PRINTS" id="PR00301">
    <property type="entry name" value="HEATSHOCK70"/>
</dbReference>
<dbReference type="SUPFAM" id="SSF53067">
    <property type="entry name" value="Actin-like ATPase domain"/>
    <property type="match status" value="2"/>
</dbReference>
<dbReference type="SUPFAM" id="SSF100934">
    <property type="entry name" value="Heat shock protein 70kD (HSP70), C-terminal subdomain"/>
    <property type="match status" value="1"/>
</dbReference>
<dbReference type="SUPFAM" id="SSF100920">
    <property type="entry name" value="Heat shock protein 70kD (HSP70), peptide-binding domain"/>
    <property type="match status" value="1"/>
</dbReference>
<dbReference type="PROSITE" id="PS00297">
    <property type="entry name" value="HSP70_1"/>
    <property type="match status" value="1"/>
</dbReference>
<dbReference type="PROSITE" id="PS00329">
    <property type="entry name" value="HSP70_2"/>
    <property type="match status" value="1"/>
</dbReference>
<dbReference type="PROSITE" id="PS01036">
    <property type="entry name" value="HSP70_3"/>
    <property type="match status" value="1"/>
</dbReference>
<evidence type="ECO:0000255" key="1">
    <source>
        <dbReference type="HAMAP-Rule" id="MF_00332"/>
    </source>
</evidence>
<evidence type="ECO:0000256" key="2">
    <source>
        <dbReference type="SAM" id="MobiDB-lite"/>
    </source>
</evidence>
<name>DNAK_OCEIH</name>
<keyword id="KW-0067">ATP-binding</keyword>
<keyword id="KW-0143">Chaperone</keyword>
<keyword id="KW-0547">Nucleotide-binding</keyword>
<keyword id="KW-0597">Phosphoprotein</keyword>
<keyword id="KW-1185">Reference proteome</keyword>
<keyword id="KW-0346">Stress response</keyword>
<feature type="chain" id="PRO_0000078505" description="Chaperone protein DnaK">
    <location>
        <begin position="1"/>
        <end position="612"/>
    </location>
</feature>
<feature type="region of interest" description="Disordered" evidence="2">
    <location>
        <begin position="524"/>
        <end position="560"/>
    </location>
</feature>
<feature type="region of interest" description="Disordered" evidence="2">
    <location>
        <begin position="572"/>
        <end position="612"/>
    </location>
</feature>
<feature type="compositionally biased region" description="Basic and acidic residues" evidence="2">
    <location>
        <begin position="524"/>
        <end position="544"/>
    </location>
</feature>
<feature type="compositionally biased region" description="Low complexity" evidence="2">
    <location>
        <begin position="574"/>
        <end position="586"/>
    </location>
</feature>
<feature type="compositionally biased region" description="Acidic residues" evidence="2">
    <location>
        <begin position="587"/>
        <end position="612"/>
    </location>
</feature>
<feature type="modified residue" description="Phosphothreonine; by autocatalysis" evidence="1">
    <location>
        <position position="173"/>
    </location>
</feature>
<protein>
    <recommendedName>
        <fullName evidence="1">Chaperone protein DnaK</fullName>
    </recommendedName>
    <alternativeName>
        <fullName evidence="1">HSP70</fullName>
    </alternativeName>
    <alternativeName>
        <fullName evidence="1">Heat shock 70 kDa protein</fullName>
    </alternativeName>
    <alternativeName>
        <fullName evidence="1">Heat shock protein 70</fullName>
    </alternativeName>
</protein>
<proteinExistence type="inferred from homology"/>
<sequence>MSKIIGIDLGTTNSCVSVMEGGEAVVIPNPEGNRTSPSVVAFKNGERQVGEVAKRQAITNPNTIQSIKRHMGTDYKVKIEEKEYTPQEVSAIILQYIKSYAEDYIGEKVEKAVITVPAYFNDAERQATKDAGKIAGLEVERIINEPTAAALAYGIDKEDQDQTILVYDLGGGTFDVSILDIGDGTFEVVSTAGDNRLGGDDFDQVIIDHMVQEFKKENAIDLSQDKMATQRLKDAAEKAKKDLSGVTQTQISLPFITAGDAGPLHLEMTMSRAKFDELSSDLVERTMQPTRKALSDASLSKSDIDKVILVGGSTRIPAVQEAIKKELGQDPSKGVNPDEVVALGAAIQGGVLQGDVKDVLLLDVTPLSLGIETMGAVTTKLIERNTTIPTSASQTFSTAADNQTAVDIHVLQGEREMASDNKTLGRFQLTDIPPAPRGMPQIEVSFDIDANGIVNVRAKDLGTNKEQSITIKSSSGLSDDEVDRMVKEAEENADADKQRREEVDLRNEADQLIFTTDKTIKDLDDKVSEEDKQKAESAKDELKQALESGDMEQVKAKKDALEEHVQQLSAKLYEQVQQEAQQASGEQGEESGNQDDDVVDADYSEVDDDDKK</sequence>
<accession>Q8EPW4</accession>
<reference key="1">
    <citation type="journal article" date="2002" name="Nucleic Acids Res.">
        <title>Genome sequence of Oceanobacillus iheyensis isolated from the Iheya Ridge and its unexpected adaptive capabilities to extreme environments.</title>
        <authorList>
            <person name="Takami H."/>
            <person name="Takaki Y."/>
            <person name="Uchiyama I."/>
        </authorList>
    </citation>
    <scope>NUCLEOTIDE SEQUENCE [LARGE SCALE GENOMIC DNA]</scope>
    <source>
        <strain>DSM 14371 / CIP 107618 / JCM 11309 / KCTC 3954 / HTE831</strain>
    </source>
</reference>